<accession>P81910</accession>
<accession>B7VC06</accession>
<accession>B7VC10</accession>
<accession>B7VC50</accession>
<accession>B7VC52</accession>
<accession>B7VC62</accession>
<accession>B7VC68</accession>
<accession>B7VC76</accession>
<accession>B7VC81</accession>
<accession>B7VC83</accession>
<accession>B7VC85</accession>
<accession>B7VC86</accession>
<accession>B7VC87</accession>
<accession>B7VC91</accession>
<accession>B7VC99</accession>
<accession>B7VCA1</accession>
<accession>B7VCA6</accession>
<accession>Q9U6X6</accession>
<accession>Q9VQ19</accession>
<feature type="chain" id="PRO_0000174233" description="Odorant receptor 22b">
    <location>
        <begin position="1"/>
        <end position="397"/>
    </location>
</feature>
<feature type="topological domain" description="Cytoplasmic" evidence="2">
    <location>
        <begin position="1"/>
        <end position="49"/>
    </location>
</feature>
<feature type="transmembrane region" description="Helical; Name=1" evidence="2">
    <location>
        <begin position="50"/>
        <end position="70"/>
    </location>
</feature>
<feature type="topological domain" description="Extracellular" evidence="2">
    <location>
        <begin position="71"/>
        <end position="85"/>
    </location>
</feature>
<feature type="transmembrane region" description="Helical; Name=2" evidence="2">
    <location>
        <begin position="86"/>
        <end position="105"/>
    </location>
</feature>
<feature type="topological domain" description="Cytoplasmic" evidence="2">
    <location>
        <begin position="106"/>
        <end position="143"/>
    </location>
</feature>
<feature type="transmembrane region" description="Helical; Name=3" evidence="2">
    <location>
        <begin position="144"/>
        <end position="164"/>
    </location>
</feature>
<feature type="topological domain" description="Extracellular" evidence="2">
    <location>
        <begin position="165"/>
        <end position="194"/>
    </location>
</feature>
<feature type="transmembrane region" description="Helical; Name=4" evidence="2">
    <location>
        <begin position="195"/>
        <end position="215"/>
    </location>
</feature>
<feature type="topological domain" description="Cytoplasmic" evidence="2">
    <location>
        <begin position="216"/>
        <end position="268"/>
    </location>
</feature>
<feature type="transmembrane region" description="Helical; Name=5" evidence="2">
    <location>
        <begin position="269"/>
        <end position="289"/>
    </location>
</feature>
<feature type="topological domain" description="Extracellular" evidence="2">
    <location>
        <begin position="290"/>
        <end position="295"/>
    </location>
</feature>
<feature type="transmembrane region" description="Helical; Name=6" evidence="2">
    <location>
        <begin position="296"/>
        <end position="316"/>
    </location>
</feature>
<feature type="topological domain" description="Cytoplasmic" evidence="2">
    <location>
        <begin position="317"/>
        <end position="347"/>
    </location>
</feature>
<feature type="transmembrane region" description="Helical; Name=7" evidence="2">
    <location>
        <begin position="348"/>
        <end position="368"/>
    </location>
</feature>
<feature type="topological domain" description="Extracellular" evidence="2">
    <location>
        <begin position="369"/>
        <end position="397"/>
    </location>
</feature>
<feature type="sequence variant" description="In strain: MA7." evidence="8">
    <original>S</original>
    <variation>G</variation>
    <location>
        <position position="3"/>
    </location>
</feature>
<feature type="sequence variant" description="In strain: LA116, MA18, MA45, MA48, MA50, MA7, MA8, MW25, MW29, MW3, MW32, MW37, MW44, MW46, MW56, MW6, MW7, MW9, NC21a, NC52a, NC62a, NC73a and NC79b." evidence="8">
    <original>Q</original>
    <variation>K</variation>
    <location>
        <position position="4"/>
    </location>
</feature>
<feature type="sequence variant" description="In strain: LA116, MA13, MA18, MA43, MA45, MA48, MA50, MA7, MA74, MA8, MW25, MW27, MW29, MW3, MW32, MW37, MW44, MW46, MW56, MW6, MW7, MW9, NC21a, NC52a, NC62a, NC73a and NC79b." evidence="8">
    <original>V</original>
    <variation>I</variation>
    <location>
        <position position="25"/>
    </location>
</feature>
<feature type="sequence variant" description="In strain: NC52a and NC73a." evidence="8">
    <original>V</original>
    <variation>L</variation>
    <location>
        <position position="30"/>
    </location>
</feature>
<feature type="sequence variant" description="In strain: NC21a, NC52a, NC62a, NC73a and NC79b." evidence="8">
    <original>V</original>
    <variation>E</variation>
    <location>
        <position position="38"/>
    </location>
</feature>
<feature type="sequence variant" description="In strain: LA116, MA45, MA50, MW37, MW6 and MW9." evidence="8">
    <original>D</original>
    <variation>I</variation>
    <location>
        <position position="45"/>
    </location>
</feature>
<feature type="sequence variant" description="In strain: LA116." evidence="8">
    <original>H</original>
    <variation>P</variation>
    <location>
        <position position="47"/>
    </location>
</feature>
<feature type="sequence variant" description="In strain: MA45, MA50, MW37, MW6 and MW9." evidence="8">
    <original>V</original>
    <variation>A</variation>
    <location>
        <position position="69"/>
    </location>
</feature>
<feature type="sequence variant" description="In strain: LA116." evidence="8">
    <original>I</original>
    <variation>L</variation>
    <location>
        <position position="87"/>
    </location>
</feature>
<feature type="sequence variant" description="In strain: LA116." evidence="8">
    <original>Q</original>
    <variation>E</variation>
    <location>
        <position position="88"/>
    </location>
</feature>
<feature type="sequence variant" description="In strain: NC21a, NC52a, NC62a, NC73a and NC79b." evidence="8">
    <original>N</original>
    <variation>D</variation>
    <location>
        <position position="92"/>
    </location>
</feature>
<feature type="sequence variant" description="In strain: LA116." evidence="8">
    <original>M</original>
    <variation>V</variation>
    <location>
        <position position="93"/>
    </location>
</feature>
<feature type="sequence variant" description="In strain: MA45, MA50, MW37, MW6 and MW9." evidence="8">
    <original>Y</original>
    <variation>C</variation>
    <location>
        <position position="101"/>
    </location>
</feature>
<feature type="sequence variant" description="In strain: MA45, MA50, MW37, MW6 and MW9." evidence="8">
    <original>L</original>
    <variation>F</variation>
    <location>
        <position position="102"/>
    </location>
</feature>
<feature type="sequence variant" description="In strain: MA45, MA50, MW37, MW6 and MW9." evidence="8">
    <original>Q</original>
    <variation>E</variation>
    <location>
        <position position="111"/>
    </location>
</feature>
<feature type="sequence variant" description="In strain: MA45, MA50, MW37, MW6 and MW9." evidence="8">
    <original>C</original>
    <variation>R</variation>
    <location>
        <position position="126"/>
    </location>
</feature>
<feature type="sequence variant" description="In strain: LA9." evidence="8">
    <original>G</original>
    <variation>A</variation>
    <location>
        <position position="140"/>
    </location>
</feature>
<feature type="sequence variant" description="In strain: MA45, MA50, MW37, MW6 and MW9." evidence="8">
    <original>A</original>
    <variation>L</variation>
    <location>
        <position position="150"/>
    </location>
</feature>
<feature type="sequence variant" description="In strain: MA45, MA50, MW37, MW6 and MW9." evidence="8">
    <original>I</original>
    <variation>F</variation>
    <location>
        <position position="156"/>
    </location>
</feature>
<feature type="sequence variant" description="In strain: MA45, MA50, MW37, MW6 and MW9." evidence="8">
    <original>S</original>
    <variation>T</variation>
    <location>
        <position position="157"/>
    </location>
</feature>
<feature type="sequence variant" description="In strain: MA45, MA50, MW37, MW6 and MW9." evidence="8">
    <original>I</original>
    <variation>V</variation>
    <location>
        <position position="167"/>
    </location>
</feature>
<feature type="sequence variant" description="In strain: LA116, MA13, MA18, MA43, MA45, MA48, MA50, MA7, MA74, MA8, MW25, MW27, MW29, MW3, MW32, MW37, MW44, MW46, MW56, MW6, MW7, MW9, NC21a, NC52a, NC62a, NC73a and NC79b." evidence="8">
    <original>R</original>
    <variation>M</variation>
    <location>
        <position position="194"/>
    </location>
</feature>
<feature type="sequence variant" description="In strain: LA116." evidence="8">
    <original>W</original>
    <variation>L</variation>
    <location>
        <position position="196"/>
    </location>
</feature>
<feature type="sequence variant" description="In strain: NC21a, NC52a, NC62a, NC73a and NC79b." evidence="8">
    <original>D</original>
    <variation>A</variation>
    <location>
        <position position="201"/>
    </location>
</feature>
<feature type="sequence variant" description="In strain: LA116, MA45, MA50, MW37, MW6, MW9, NC52a and NC73a." evidence="8">
    <original>V</original>
    <variation>L</variation>
    <location>
        <position position="213"/>
    </location>
</feature>
<feature type="sequence variant" description="In strain: LA116, MA45, MA50, MW37, MW6 and MW9." evidence="8">
    <original>I</original>
    <variation>M</variation>
    <location>
        <position position="214"/>
    </location>
</feature>
<feature type="sequence variant" description="In strain: LA116, MA45, MA50, MW37, MW6 and MW9." evidence="8">
    <original>T</original>
    <variation>S</variation>
    <location>
        <position position="220"/>
    </location>
</feature>
<feature type="sequence variant" description="In strain: MA45, MA50, MW37, MW6 and MW9." evidence="8">
    <original>R</original>
    <variation>M</variation>
    <location>
        <position position="235"/>
    </location>
</feature>
<feature type="sequence variant" description="In strain: LA116, MA45, MA50, MW37, MW6 and MW9." evidence="8">
    <original>A</original>
    <variation>T</variation>
    <location>
        <position position="245"/>
    </location>
</feature>
<feature type="sequence variant" description="In strain: MW44." evidence="8">
    <original>D</original>
    <variation>N</variation>
    <location>
        <position position="256"/>
    </location>
</feature>
<feature type="sequence variant" description="In strain: MA45, MA50, MW37, MW6 and MW9." evidence="8">
    <original>G</original>
    <variation>R</variation>
    <location>
        <position position="267"/>
    </location>
</feature>
<feature type="sequence variant" description="In strain: LA108 and LA120." evidence="8">
    <original>I</original>
    <variation>V</variation>
    <location>
        <position position="278"/>
    </location>
</feature>
<feature type="sequence variant" description="In strain: LA116, LA25, LA4, MA24, MA45, MA50, MW37, MW6 and MW9." evidence="8">
    <original>Q</original>
    <variation>E</variation>
    <location>
        <position position="309"/>
    </location>
</feature>
<feature type="sequence variant" description="In strain: NC16a." evidence="8">
    <original>F</original>
    <variation>S</variation>
    <location>
        <position position="313"/>
    </location>
</feature>
<feature type="sequence variant" description="In strain: LA116." evidence="8">
    <original>R</original>
    <variation>S</variation>
    <location>
        <position position="341"/>
    </location>
</feature>
<feature type="sequence variant" description="In strain: NC52a, NC73a and NC79b." evidence="8">
    <original>L</original>
    <variation>I</variation>
    <location>
        <position position="354"/>
    </location>
</feature>
<feature type="sequence variant" description="In strain: LA9." evidence="8">
    <original>V</original>
    <variation>M</variation>
    <location>
        <position position="387"/>
    </location>
</feature>
<feature type="sequence conflict" description="In Ref. 4; CAR79365." evidence="10" ref="4">
    <original>STFVTLLIF</original>
    <variation>LAFVNIVML</variation>
    <location>
        <begin position="52"/>
        <end position="60"/>
    </location>
</feature>
<feature type="sequence conflict" description="In Ref. 1; AAD26359." evidence="10" ref="1">
    <original>L</original>
    <variation>V</variation>
    <location>
        <position position="58"/>
    </location>
</feature>
<feature type="sequence conflict" description="In Ref. 4; CAR79365." evidence="10" ref="4">
    <original>VSVEYIQ</original>
    <variation>ISIEYLH</variation>
    <location>
        <begin position="67"/>
        <end position="73"/>
    </location>
</feature>
<feature type="sequence conflict" description="In Ref. 4; CAR79363/CAR79362/CAR79361/CAR79351/CAR79350." evidence="10" ref="4">
    <original>ERTIV</original>
    <variation>DRSII</variation>
    <location>
        <begin position="129"/>
        <end position="133"/>
    </location>
</feature>
<feature type="sequence conflict" description="In Ref. 3." evidence="10" ref="3">
    <original>D</original>
    <variation>TICFDKFFYLPYFFS</variation>
    <location>
        <position position="256"/>
    </location>
</feature>
<feature type="sequence conflict" description="In Ref. 3." evidence="10" ref="3">
    <original>MVKLAFTVVTIVKQFNLAEKFQ</original>
    <variation>VSINQYEL</variation>
    <location>
        <begin position="376"/>
        <end position="397"/>
    </location>
</feature>
<gene>
    <name type="primary">Or22b</name>
    <name type="synonym">AN12</name>
    <name type="synonym">DOR22A.2</name>
    <name type="synonym">dor67</name>
    <name type="synonym">Or22A.2</name>
    <name type="ORF">CG4231</name>
</gene>
<reference key="1">
    <citation type="journal article" date="1999" name="Cell">
        <title>A spatial map of olfactory receptor expression in the Drosophila antenna.</title>
        <authorList>
            <person name="Vosshall L.B."/>
            <person name="Amrein H."/>
            <person name="Morozov P.S."/>
            <person name="Rzhetsky A."/>
            <person name="Axel R."/>
        </authorList>
    </citation>
    <scope>NUCLEOTIDE SEQUENCE [MRNA]</scope>
    <scope>TISSUE SPECIFICITY</scope>
    <source>
        <strain>Oregon-R</strain>
        <tissue>Antenna</tissue>
    </source>
</reference>
<reference key="2">
    <citation type="submission" date="1999-05" db="EMBL/GenBank/DDBJ databases">
        <authorList>
            <person name="Vosshall L.B."/>
            <person name="Amrein H."/>
            <person name="Morozov P.S."/>
            <person name="Rzhetsky A."/>
            <person name="Axel R."/>
        </authorList>
    </citation>
    <scope>SEQUENCE REVISION TO 58</scope>
</reference>
<reference key="3">
    <citation type="journal article" date="1999" name="Genomics">
        <title>Identification of candidate Drosophila olfactory receptors from genomic DNA sequence.</title>
        <authorList>
            <person name="Gao Q."/>
            <person name="Chess A."/>
        </authorList>
    </citation>
    <scope>NUCLEOTIDE SEQUENCE [GENOMIC DNA]</scope>
</reference>
<reference key="4">
    <citation type="journal article" date="2009" name="Mol. Biol. Evol.">
        <title>Nucleotide and copy-number polymorphism at the odorant receptor genes Or22a and Or22b in Drosophila melanogaster.</title>
        <authorList>
            <person name="Aguade M."/>
        </authorList>
    </citation>
    <scope>NUCLEOTIDE SEQUENCE [GENOMIC DNA]</scope>
    <scope>VARIANTS GLY-3; LYS-4; ILE-25; LEU-30; GLU-38; ILE-45; PRO-47; ALA-69; LEU-87; GLU-88; ASP-92; VAL-93; CYS-101; PHE-102; GLU-111; ARG-126; ALA-140; LEU-150; PHE-156; THR-157; VAL-167; MET-194; LEU-196; ALA-201; LEU-213; MET-214; SER-220; MET-235; THR-245; ASN-256; ARG-267; VAL-278; GLU-309; SER-313; SER-341; ILE-354 AND MET-387</scope>
    <source>
        <strain>CN1</strain>
        <strain>CN13</strain>
        <strain>CN14</strain>
        <strain>CN18</strain>
        <strain>CN21</strain>
        <strain>CN28</strain>
        <strain>CN29</strain>
        <strain>CN3</strain>
        <strain>CN43</strain>
        <strain>CN45</strain>
        <strain>CN46</strain>
        <strain>CN51</strain>
        <strain>LA108</strain>
        <strain>LA116</strain>
        <strain>LA120</strain>
        <strain>LA128</strain>
        <strain>LA13</strain>
        <strain>LA15</strain>
        <strain>LA25</strain>
        <strain>LA3</strain>
        <strain>LA32</strain>
        <strain>LA34</strain>
        <strain>LA35</strain>
        <strain>LA4</strain>
        <strain>LA9</strain>
        <strain>MA13</strain>
        <strain>MA18</strain>
        <strain>MA21</strain>
        <strain>MA24</strain>
        <strain>MA43</strain>
        <strain>MA45</strain>
        <strain>MA48</strain>
        <strain>MA50</strain>
        <strain>MA7</strain>
        <strain>MA74</strain>
        <strain>MA8</strain>
        <strain>MW25</strain>
        <strain>MW27</strain>
        <strain>MW29</strain>
        <strain>MW3</strain>
        <strain>MW32</strain>
        <strain>MW37</strain>
        <strain>MW44</strain>
        <strain>MW46</strain>
        <strain>MW56</strain>
        <strain>MW6</strain>
        <strain>MW7</strain>
        <strain>MW9</strain>
        <strain>NC100b</strain>
        <strain>NC10b</strain>
        <strain>NC16a</strain>
        <strain>NC1b</strain>
        <strain>NC21a</strain>
        <strain>NC37a</strain>
        <strain>NC52a</strain>
        <strain>NC62a</strain>
        <strain>NC73a</strain>
        <strain>NC79b</strain>
        <strain>NC84a</strain>
        <strain>NC88a</strain>
        <strain>NC89a</strain>
        <strain>NC97a</strain>
    </source>
</reference>
<reference key="5">
    <citation type="journal article" date="2000" name="Science">
        <title>The genome sequence of Drosophila melanogaster.</title>
        <authorList>
            <person name="Adams M.D."/>
            <person name="Celniker S.E."/>
            <person name="Holt R.A."/>
            <person name="Evans C.A."/>
            <person name="Gocayne J.D."/>
            <person name="Amanatides P.G."/>
            <person name="Scherer S.E."/>
            <person name="Li P.W."/>
            <person name="Hoskins R.A."/>
            <person name="Galle R.F."/>
            <person name="George R.A."/>
            <person name="Lewis S.E."/>
            <person name="Richards S."/>
            <person name="Ashburner M."/>
            <person name="Henderson S.N."/>
            <person name="Sutton G.G."/>
            <person name="Wortman J.R."/>
            <person name="Yandell M.D."/>
            <person name="Zhang Q."/>
            <person name="Chen L.X."/>
            <person name="Brandon R.C."/>
            <person name="Rogers Y.-H.C."/>
            <person name="Blazej R.G."/>
            <person name="Champe M."/>
            <person name="Pfeiffer B.D."/>
            <person name="Wan K.H."/>
            <person name="Doyle C."/>
            <person name="Baxter E.G."/>
            <person name="Helt G."/>
            <person name="Nelson C.R."/>
            <person name="Miklos G.L.G."/>
            <person name="Abril J.F."/>
            <person name="Agbayani A."/>
            <person name="An H.-J."/>
            <person name="Andrews-Pfannkoch C."/>
            <person name="Baldwin D."/>
            <person name="Ballew R.M."/>
            <person name="Basu A."/>
            <person name="Baxendale J."/>
            <person name="Bayraktaroglu L."/>
            <person name="Beasley E.M."/>
            <person name="Beeson K.Y."/>
            <person name="Benos P.V."/>
            <person name="Berman B.P."/>
            <person name="Bhandari D."/>
            <person name="Bolshakov S."/>
            <person name="Borkova D."/>
            <person name="Botchan M.R."/>
            <person name="Bouck J."/>
            <person name="Brokstein P."/>
            <person name="Brottier P."/>
            <person name="Burtis K.C."/>
            <person name="Busam D.A."/>
            <person name="Butler H."/>
            <person name="Cadieu E."/>
            <person name="Center A."/>
            <person name="Chandra I."/>
            <person name="Cherry J.M."/>
            <person name="Cawley S."/>
            <person name="Dahlke C."/>
            <person name="Davenport L.B."/>
            <person name="Davies P."/>
            <person name="de Pablos B."/>
            <person name="Delcher A."/>
            <person name="Deng Z."/>
            <person name="Mays A.D."/>
            <person name="Dew I."/>
            <person name="Dietz S.M."/>
            <person name="Dodson K."/>
            <person name="Doup L.E."/>
            <person name="Downes M."/>
            <person name="Dugan-Rocha S."/>
            <person name="Dunkov B.C."/>
            <person name="Dunn P."/>
            <person name="Durbin K.J."/>
            <person name="Evangelista C.C."/>
            <person name="Ferraz C."/>
            <person name="Ferriera S."/>
            <person name="Fleischmann W."/>
            <person name="Fosler C."/>
            <person name="Gabrielian A.E."/>
            <person name="Garg N.S."/>
            <person name="Gelbart W.M."/>
            <person name="Glasser K."/>
            <person name="Glodek A."/>
            <person name="Gong F."/>
            <person name="Gorrell J.H."/>
            <person name="Gu Z."/>
            <person name="Guan P."/>
            <person name="Harris M."/>
            <person name="Harris N.L."/>
            <person name="Harvey D.A."/>
            <person name="Heiman T.J."/>
            <person name="Hernandez J.R."/>
            <person name="Houck J."/>
            <person name="Hostin D."/>
            <person name="Houston K.A."/>
            <person name="Howland T.J."/>
            <person name="Wei M.-H."/>
            <person name="Ibegwam C."/>
            <person name="Jalali M."/>
            <person name="Kalush F."/>
            <person name="Karpen G.H."/>
            <person name="Ke Z."/>
            <person name="Kennison J.A."/>
            <person name="Ketchum K.A."/>
            <person name="Kimmel B.E."/>
            <person name="Kodira C.D."/>
            <person name="Kraft C.L."/>
            <person name="Kravitz S."/>
            <person name="Kulp D."/>
            <person name="Lai Z."/>
            <person name="Lasko P."/>
            <person name="Lei Y."/>
            <person name="Levitsky A.A."/>
            <person name="Li J.H."/>
            <person name="Li Z."/>
            <person name="Liang Y."/>
            <person name="Lin X."/>
            <person name="Liu X."/>
            <person name="Mattei B."/>
            <person name="McIntosh T.C."/>
            <person name="McLeod M.P."/>
            <person name="McPherson D."/>
            <person name="Merkulov G."/>
            <person name="Milshina N.V."/>
            <person name="Mobarry C."/>
            <person name="Morris J."/>
            <person name="Moshrefi A."/>
            <person name="Mount S.M."/>
            <person name="Moy M."/>
            <person name="Murphy B."/>
            <person name="Murphy L."/>
            <person name="Muzny D.M."/>
            <person name="Nelson D.L."/>
            <person name="Nelson D.R."/>
            <person name="Nelson K.A."/>
            <person name="Nixon K."/>
            <person name="Nusskern D.R."/>
            <person name="Pacleb J.M."/>
            <person name="Palazzolo M."/>
            <person name="Pittman G.S."/>
            <person name="Pan S."/>
            <person name="Pollard J."/>
            <person name="Puri V."/>
            <person name="Reese M.G."/>
            <person name="Reinert K."/>
            <person name="Remington K."/>
            <person name="Saunders R.D.C."/>
            <person name="Scheeler F."/>
            <person name="Shen H."/>
            <person name="Shue B.C."/>
            <person name="Siden-Kiamos I."/>
            <person name="Simpson M."/>
            <person name="Skupski M.P."/>
            <person name="Smith T.J."/>
            <person name="Spier E."/>
            <person name="Spradling A.C."/>
            <person name="Stapleton M."/>
            <person name="Strong R."/>
            <person name="Sun E."/>
            <person name="Svirskas R."/>
            <person name="Tector C."/>
            <person name="Turner R."/>
            <person name="Venter E."/>
            <person name="Wang A.H."/>
            <person name="Wang X."/>
            <person name="Wang Z.-Y."/>
            <person name="Wassarman D.A."/>
            <person name="Weinstock G.M."/>
            <person name="Weissenbach J."/>
            <person name="Williams S.M."/>
            <person name="Woodage T."/>
            <person name="Worley K.C."/>
            <person name="Wu D."/>
            <person name="Yang S."/>
            <person name="Yao Q.A."/>
            <person name="Ye J."/>
            <person name="Yeh R.-F."/>
            <person name="Zaveri J.S."/>
            <person name="Zhan M."/>
            <person name="Zhang G."/>
            <person name="Zhao Q."/>
            <person name="Zheng L."/>
            <person name="Zheng X.H."/>
            <person name="Zhong F.N."/>
            <person name="Zhong W."/>
            <person name="Zhou X."/>
            <person name="Zhu S.C."/>
            <person name="Zhu X."/>
            <person name="Smith H.O."/>
            <person name="Gibbs R.A."/>
            <person name="Myers E.W."/>
            <person name="Rubin G.M."/>
            <person name="Venter J.C."/>
        </authorList>
    </citation>
    <scope>NUCLEOTIDE SEQUENCE [LARGE SCALE GENOMIC DNA]</scope>
    <source>
        <strain>Berkeley</strain>
    </source>
</reference>
<reference key="6">
    <citation type="journal article" date="2002" name="Genome Biol.">
        <title>Annotation of the Drosophila melanogaster euchromatic genome: a systematic review.</title>
        <authorList>
            <person name="Misra S."/>
            <person name="Crosby M.A."/>
            <person name="Mungall C.J."/>
            <person name="Matthews B.B."/>
            <person name="Campbell K.S."/>
            <person name="Hradecky P."/>
            <person name="Huang Y."/>
            <person name="Kaminker J.S."/>
            <person name="Millburn G.H."/>
            <person name="Prochnik S.E."/>
            <person name="Smith C.D."/>
            <person name="Tupy J.L."/>
            <person name="Whitfield E.J."/>
            <person name="Bayraktaroglu L."/>
            <person name="Berman B.P."/>
            <person name="Bettencourt B.R."/>
            <person name="Celniker S.E."/>
            <person name="de Grey A.D.N.J."/>
            <person name="Drysdale R.A."/>
            <person name="Harris N.L."/>
            <person name="Richter J."/>
            <person name="Russo S."/>
            <person name="Schroeder A.J."/>
            <person name="Shu S.Q."/>
            <person name="Stapleton M."/>
            <person name="Yamada C."/>
            <person name="Ashburner M."/>
            <person name="Gelbart W.M."/>
            <person name="Rubin G.M."/>
            <person name="Lewis S.E."/>
        </authorList>
    </citation>
    <scope>GENOME REANNOTATION</scope>
    <source>
        <strain>Berkeley</strain>
    </source>
</reference>
<reference key="7">
    <citation type="journal article" date="1999" name="Neuron">
        <title>A novel family of divergent seven-transmembrane proteins: candidate odorant receptors in Drosophila.</title>
        <authorList>
            <person name="Clyne P.J."/>
            <person name="Warr C.G."/>
            <person name="Freeman M.R."/>
            <person name="Lessing D."/>
            <person name="Kim J."/>
            <person name="Carlson J.R."/>
        </authorList>
    </citation>
    <scope>IDENTIFICATION</scope>
    <scope>TISSUE SPECIFICITY</scope>
    <source>
        <tissue>Antenna</tissue>
    </source>
</reference>
<reference key="8">
    <citation type="journal article" date="2000" name="Cell">
        <title>An olfactory sensory map in the fly brain.</title>
        <authorList>
            <person name="Vosshall L.B."/>
            <person name="Wong A.M."/>
            <person name="Axel R."/>
        </authorList>
    </citation>
    <scope>TISSUE SPECIFICITY</scope>
</reference>
<reference key="9">
    <citation type="journal article" date="2003" name="Neuron">
        <title>Integrating the molecular and cellular basis of odor coding in the Drosophila antenna.</title>
        <authorList>
            <person name="Dobritsa A.A."/>
            <person name="van der Goes van Naters W."/>
            <person name="Warr C.G."/>
            <person name="Steinbrecht R.A."/>
            <person name="Carlson J.R."/>
        </authorList>
    </citation>
    <scope>FUNCTION</scope>
    <scope>TISSUE SPECIFICITY</scope>
</reference>
<reference key="10">
    <citation type="journal article" date="2006" name="PLoS Biol.">
        <title>Atypical membrane topology and heteromeric function of Drosophila odorant receptors in vivo.</title>
        <authorList>
            <person name="Benton R."/>
            <person name="Sachse S."/>
            <person name="Michnick S.W."/>
            <person name="Vosshall L.B."/>
        </authorList>
    </citation>
    <scope>FUNCTION</scope>
    <scope>INTERACTION WITH ORCO</scope>
    <scope>TISSUE SPECIFICITY</scope>
</reference>
<reference key="11">
    <citation type="journal article" date="2012" name="Chem. Senses">
        <title>Genetic variation in odorant receptors contributes to variation in olfactory behavior in a natural population of Drosophila melanogaster.</title>
        <authorList>
            <person name="Richgels P.K."/>
            <person name="Rollmann S.M."/>
        </authorList>
    </citation>
    <scope>FUNCTION</scope>
</reference>
<protein>
    <recommendedName>
        <fullName>Odorant receptor 22b</fullName>
    </recommendedName>
</protein>
<organism>
    <name type="scientific">Drosophila melanogaster</name>
    <name type="common">Fruit fly</name>
    <dbReference type="NCBI Taxonomy" id="7227"/>
    <lineage>
        <taxon>Eukaryota</taxon>
        <taxon>Metazoa</taxon>
        <taxon>Ecdysozoa</taxon>
        <taxon>Arthropoda</taxon>
        <taxon>Hexapoda</taxon>
        <taxon>Insecta</taxon>
        <taxon>Pterygota</taxon>
        <taxon>Neoptera</taxon>
        <taxon>Endopterygota</taxon>
        <taxon>Diptera</taxon>
        <taxon>Brachycera</taxon>
        <taxon>Muscomorpha</taxon>
        <taxon>Ephydroidea</taxon>
        <taxon>Drosophilidae</taxon>
        <taxon>Drosophila</taxon>
        <taxon>Sophophora</taxon>
    </lineage>
</organism>
<dbReference type="EMBL" id="AF127924">
    <property type="protein sequence ID" value="AAD26359.2"/>
    <property type="molecule type" value="mRNA"/>
</dbReference>
<dbReference type="EMBL" id="FM212142">
    <property type="protein sequence ID" value="CAR79042.1"/>
    <property type="molecule type" value="Genomic_DNA"/>
</dbReference>
<dbReference type="EMBL" id="FM212143">
    <property type="protein sequence ID" value="CAR79044.1"/>
    <property type="molecule type" value="Genomic_DNA"/>
</dbReference>
<dbReference type="EMBL" id="FM212144">
    <property type="protein sequence ID" value="CAR79046.1"/>
    <property type="molecule type" value="Genomic_DNA"/>
</dbReference>
<dbReference type="EMBL" id="FM212145">
    <property type="protein sequence ID" value="CAR79048.1"/>
    <property type="molecule type" value="Genomic_DNA"/>
</dbReference>
<dbReference type="EMBL" id="FM212146">
    <property type="protein sequence ID" value="CAR79050.1"/>
    <property type="molecule type" value="Genomic_DNA"/>
</dbReference>
<dbReference type="EMBL" id="FM212147">
    <property type="protein sequence ID" value="CAR79052.1"/>
    <property type="molecule type" value="Genomic_DNA"/>
</dbReference>
<dbReference type="EMBL" id="FM212148">
    <property type="protein sequence ID" value="CAR79054.1"/>
    <property type="molecule type" value="Genomic_DNA"/>
</dbReference>
<dbReference type="EMBL" id="FM212149">
    <property type="protein sequence ID" value="CAR79056.1"/>
    <property type="molecule type" value="Genomic_DNA"/>
</dbReference>
<dbReference type="EMBL" id="FM212150">
    <property type="protein sequence ID" value="CAR79058.1"/>
    <property type="molecule type" value="Genomic_DNA"/>
</dbReference>
<dbReference type="EMBL" id="FM212151">
    <property type="protein sequence ID" value="CAR79060.1"/>
    <property type="molecule type" value="Genomic_DNA"/>
</dbReference>
<dbReference type="EMBL" id="FM212152">
    <property type="protein sequence ID" value="CAR79062.1"/>
    <property type="molecule type" value="Genomic_DNA"/>
</dbReference>
<dbReference type="EMBL" id="FM212153">
    <property type="protein sequence ID" value="CAR79064.1"/>
    <property type="molecule type" value="Genomic_DNA"/>
</dbReference>
<dbReference type="EMBL" id="FM212154">
    <property type="protein sequence ID" value="CAR79066.1"/>
    <property type="molecule type" value="Genomic_DNA"/>
</dbReference>
<dbReference type="EMBL" id="FM212155">
    <property type="protein sequence ID" value="CAR79068.1"/>
    <property type="molecule type" value="Genomic_DNA"/>
</dbReference>
<dbReference type="EMBL" id="FM212156">
    <property type="protein sequence ID" value="CAR79070.1"/>
    <property type="molecule type" value="Genomic_DNA"/>
</dbReference>
<dbReference type="EMBL" id="FM212157">
    <property type="protein sequence ID" value="CAR79072.1"/>
    <property type="molecule type" value="Genomic_DNA"/>
</dbReference>
<dbReference type="EMBL" id="FM212158">
    <property type="protein sequence ID" value="CAR79074.1"/>
    <property type="molecule type" value="Genomic_DNA"/>
</dbReference>
<dbReference type="EMBL" id="FM212159">
    <property type="protein sequence ID" value="CAR79076.1"/>
    <property type="molecule type" value="Genomic_DNA"/>
</dbReference>
<dbReference type="EMBL" id="FM212160">
    <property type="protein sequence ID" value="CAR79078.1"/>
    <property type="molecule type" value="Genomic_DNA"/>
</dbReference>
<dbReference type="EMBL" id="FM212161">
    <property type="protein sequence ID" value="CAR79080.1"/>
    <property type="molecule type" value="Genomic_DNA"/>
</dbReference>
<dbReference type="EMBL" id="FM212162">
    <property type="protein sequence ID" value="CAR79082.1"/>
    <property type="molecule type" value="Genomic_DNA"/>
</dbReference>
<dbReference type="EMBL" id="FM212163">
    <property type="protein sequence ID" value="CAR79084.1"/>
    <property type="molecule type" value="Genomic_DNA"/>
</dbReference>
<dbReference type="EMBL" id="FM212164">
    <property type="protein sequence ID" value="CAR79086.1"/>
    <property type="molecule type" value="Genomic_DNA"/>
</dbReference>
<dbReference type="EMBL" id="FM212165">
    <property type="protein sequence ID" value="CAR79088.1"/>
    <property type="status" value="ALT_SEQ"/>
    <property type="molecule type" value="Genomic_DNA"/>
</dbReference>
<dbReference type="EMBL" id="FM212166">
    <property type="protein sequence ID" value="CAR79090.1"/>
    <property type="molecule type" value="Genomic_DNA"/>
</dbReference>
<dbReference type="EMBL" id="FM212167">
    <property type="protein sequence ID" value="CAR79092.1"/>
    <property type="molecule type" value="Genomic_DNA"/>
</dbReference>
<dbReference type="EMBL" id="FM212168">
    <property type="protein sequence ID" value="CAR79094.1"/>
    <property type="molecule type" value="Genomic_DNA"/>
</dbReference>
<dbReference type="EMBL" id="FM212169">
    <property type="protein sequence ID" value="CAR79096.1"/>
    <property type="molecule type" value="Genomic_DNA"/>
</dbReference>
<dbReference type="EMBL" id="FM212170">
    <property type="protein sequence ID" value="CAR79098.1"/>
    <property type="molecule type" value="Genomic_DNA"/>
</dbReference>
<dbReference type="EMBL" id="FM212171">
    <property type="protein sequence ID" value="CAR79100.1"/>
    <property type="molecule type" value="Genomic_DNA"/>
</dbReference>
<dbReference type="EMBL" id="FM212172">
    <property type="protein sequence ID" value="CAR79102.1"/>
    <property type="molecule type" value="Genomic_DNA"/>
</dbReference>
<dbReference type="EMBL" id="FM212173">
    <property type="protein sequence ID" value="CAR79104.1"/>
    <property type="molecule type" value="Genomic_DNA"/>
</dbReference>
<dbReference type="EMBL" id="FM212174">
    <property type="protein sequence ID" value="CAR79106.1"/>
    <property type="molecule type" value="Genomic_DNA"/>
</dbReference>
<dbReference type="EMBL" id="FM212175">
    <property type="protein sequence ID" value="CAR79108.1"/>
    <property type="molecule type" value="Genomic_DNA"/>
</dbReference>
<dbReference type="EMBL" id="FM212176">
    <property type="protein sequence ID" value="CAR79110.1"/>
    <property type="molecule type" value="Genomic_DNA"/>
</dbReference>
<dbReference type="EMBL" id="FM212177">
    <property type="protein sequence ID" value="CAR79112.1"/>
    <property type="molecule type" value="Genomic_DNA"/>
</dbReference>
<dbReference type="EMBL" id="FM212178">
    <property type="protein sequence ID" value="CAR79114.1"/>
    <property type="molecule type" value="Genomic_DNA"/>
</dbReference>
<dbReference type="EMBL" id="FM212180">
    <property type="protein sequence ID" value="CAR79340.1"/>
    <property type="molecule type" value="Genomic_DNA"/>
</dbReference>
<dbReference type="EMBL" id="FM212181">
    <property type="protein sequence ID" value="CAR79341.1"/>
    <property type="molecule type" value="Genomic_DNA"/>
</dbReference>
<dbReference type="EMBL" id="FM212182">
    <property type="protein sequence ID" value="CAR79342.1"/>
    <property type="molecule type" value="Genomic_DNA"/>
</dbReference>
<dbReference type="EMBL" id="FM212183">
    <property type="protein sequence ID" value="CAR79343.1"/>
    <property type="molecule type" value="Genomic_DNA"/>
</dbReference>
<dbReference type="EMBL" id="FM212184">
    <property type="protein sequence ID" value="CAR79344.1"/>
    <property type="molecule type" value="Genomic_DNA"/>
</dbReference>
<dbReference type="EMBL" id="FM212185">
    <property type="protein sequence ID" value="CAR79345.1"/>
    <property type="molecule type" value="Genomic_DNA"/>
</dbReference>
<dbReference type="EMBL" id="FM212186">
    <property type="protein sequence ID" value="CAR79346.1"/>
    <property type="molecule type" value="Genomic_DNA"/>
</dbReference>
<dbReference type="EMBL" id="FM212187">
    <property type="protein sequence ID" value="CAR79347.1"/>
    <property type="molecule type" value="Genomic_DNA"/>
</dbReference>
<dbReference type="EMBL" id="FM212188">
    <property type="protein sequence ID" value="CAR79348.1"/>
    <property type="molecule type" value="Genomic_DNA"/>
</dbReference>
<dbReference type="EMBL" id="FM212189">
    <property type="protein sequence ID" value="CAR79349.1"/>
    <property type="molecule type" value="Genomic_DNA"/>
</dbReference>
<dbReference type="EMBL" id="FM212190">
    <property type="protein sequence ID" value="CAR79350.1"/>
    <property type="molecule type" value="Genomic_DNA"/>
</dbReference>
<dbReference type="EMBL" id="FM212191">
    <property type="protein sequence ID" value="CAR79351.1"/>
    <property type="molecule type" value="Genomic_DNA"/>
</dbReference>
<dbReference type="EMBL" id="FM212192">
    <property type="protein sequence ID" value="CAR79352.1"/>
    <property type="molecule type" value="Genomic_DNA"/>
</dbReference>
<dbReference type="EMBL" id="FM212193">
    <property type="protein sequence ID" value="CAR79353.1"/>
    <property type="molecule type" value="Genomic_DNA"/>
</dbReference>
<dbReference type="EMBL" id="FM212194">
    <property type="protein sequence ID" value="CAR79354.1"/>
    <property type="molecule type" value="Genomic_DNA"/>
</dbReference>
<dbReference type="EMBL" id="FM212195">
    <property type="protein sequence ID" value="CAR79355.1"/>
    <property type="molecule type" value="Genomic_DNA"/>
</dbReference>
<dbReference type="EMBL" id="FM212196">
    <property type="protein sequence ID" value="CAR79356.1"/>
    <property type="molecule type" value="Genomic_DNA"/>
</dbReference>
<dbReference type="EMBL" id="FM212197">
    <property type="protein sequence ID" value="CAR79357.1"/>
    <property type="molecule type" value="Genomic_DNA"/>
</dbReference>
<dbReference type="EMBL" id="FM212198">
    <property type="protein sequence ID" value="CAR79358.1"/>
    <property type="molecule type" value="Genomic_DNA"/>
</dbReference>
<dbReference type="EMBL" id="FM212199">
    <property type="protein sequence ID" value="CAR79359.1"/>
    <property type="molecule type" value="Genomic_DNA"/>
</dbReference>
<dbReference type="EMBL" id="FM212200">
    <property type="protein sequence ID" value="CAR79360.1"/>
    <property type="molecule type" value="Genomic_DNA"/>
</dbReference>
<dbReference type="EMBL" id="FM212201">
    <property type="protein sequence ID" value="CAR79361.1"/>
    <property type="molecule type" value="Genomic_DNA"/>
</dbReference>
<dbReference type="EMBL" id="FM212202">
    <property type="protein sequence ID" value="CAR79362.1"/>
    <property type="molecule type" value="Genomic_DNA"/>
</dbReference>
<dbReference type="EMBL" id="FM212203">
    <property type="protein sequence ID" value="CAR79363.1"/>
    <property type="molecule type" value="Genomic_DNA"/>
</dbReference>
<dbReference type="EMBL" id="FM212205">
    <property type="protein sequence ID" value="CAR79365.1"/>
    <property type="molecule type" value="Genomic_DNA"/>
</dbReference>
<dbReference type="EMBL" id="AE014134">
    <property type="protein sequence ID" value="AAF51363.1"/>
    <property type="molecule type" value="Genomic_DNA"/>
</dbReference>
<dbReference type="RefSeq" id="NP_477425.1">
    <property type="nucleotide sequence ID" value="NM_058077.3"/>
</dbReference>
<dbReference type="SMR" id="P81910"/>
<dbReference type="BioGRID" id="59580">
    <property type="interactions" value="1"/>
</dbReference>
<dbReference type="FunCoup" id="P81910">
    <property type="interactions" value="33"/>
</dbReference>
<dbReference type="IntAct" id="P81910">
    <property type="interactions" value="1"/>
</dbReference>
<dbReference type="STRING" id="7227.FBpp0077542"/>
<dbReference type="TCDB" id="1.A.69.1.1">
    <property type="family name" value="the heteromeric odorant receptor channel (horc) family"/>
</dbReference>
<dbReference type="PaxDb" id="7227-FBpp0077542"/>
<dbReference type="EnsemblMetazoa" id="FBtr0077874">
    <property type="protein sequence ID" value="FBpp0077542"/>
    <property type="gene ID" value="FBgn0026397"/>
</dbReference>
<dbReference type="GeneID" id="33336"/>
<dbReference type="KEGG" id="dme:Dmel_CG4231"/>
<dbReference type="AGR" id="FB:FBgn0026397"/>
<dbReference type="CTD" id="33336"/>
<dbReference type="FlyBase" id="FBgn0026397">
    <property type="gene designation" value="Or22b"/>
</dbReference>
<dbReference type="VEuPathDB" id="VectorBase:FBgn0026397"/>
<dbReference type="eggNOG" id="ENOG502R7K0">
    <property type="taxonomic scope" value="Eukaryota"/>
</dbReference>
<dbReference type="GeneTree" id="ENSGT00540000073151"/>
<dbReference type="HOGENOM" id="CLU_033399_8_0_1"/>
<dbReference type="InParanoid" id="P81910"/>
<dbReference type="OMA" id="CNMIMDD"/>
<dbReference type="OrthoDB" id="6604226at2759"/>
<dbReference type="PhylomeDB" id="P81910"/>
<dbReference type="BioGRID-ORCS" id="33336">
    <property type="hits" value="0 hits in 1 CRISPR screen"/>
</dbReference>
<dbReference type="GenomeRNAi" id="33336"/>
<dbReference type="PRO" id="PR:P81910"/>
<dbReference type="Proteomes" id="UP000000803">
    <property type="component" value="Chromosome 2L"/>
</dbReference>
<dbReference type="Bgee" id="FBgn0026397">
    <property type="expression patterns" value="Expressed in antennal olfactory receptor neuron of basiconic sensillum in antenna and 7 other cell types or tissues"/>
</dbReference>
<dbReference type="ExpressionAtlas" id="P81910">
    <property type="expression patterns" value="baseline and differential"/>
</dbReference>
<dbReference type="GO" id="GO:0030425">
    <property type="term" value="C:dendrite"/>
    <property type="evidence" value="ECO:0000314"/>
    <property type="project" value="FlyBase"/>
</dbReference>
<dbReference type="GO" id="GO:0032590">
    <property type="term" value="C:dendrite membrane"/>
    <property type="evidence" value="ECO:0000314"/>
    <property type="project" value="FlyBase"/>
</dbReference>
<dbReference type="GO" id="GO:0016020">
    <property type="term" value="C:membrane"/>
    <property type="evidence" value="ECO:0000303"/>
    <property type="project" value="UniProtKB"/>
</dbReference>
<dbReference type="GO" id="GO:0005886">
    <property type="term" value="C:plasma membrane"/>
    <property type="evidence" value="ECO:0000255"/>
    <property type="project" value="FlyBase"/>
</dbReference>
<dbReference type="GO" id="GO:0170020">
    <property type="term" value="F:ionotropic olfactory receptor activity"/>
    <property type="evidence" value="ECO:0000255"/>
    <property type="project" value="FlyBase"/>
</dbReference>
<dbReference type="GO" id="GO:0005549">
    <property type="term" value="F:odorant binding"/>
    <property type="evidence" value="ECO:0000250"/>
    <property type="project" value="FlyBase"/>
</dbReference>
<dbReference type="GO" id="GO:0004984">
    <property type="term" value="F:olfactory receptor activity"/>
    <property type="evidence" value="ECO:0000318"/>
    <property type="project" value="GO_Central"/>
</dbReference>
<dbReference type="GO" id="GO:0050911">
    <property type="term" value="P:detection of chemical stimulus involved in sensory perception of smell"/>
    <property type="evidence" value="ECO:0000318"/>
    <property type="project" value="GO_Central"/>
</dbReference>
<dbReference type="GO" id="GO:0007608">
    <property type="term" value="P:sensory perception of smell"/>
    <property type="evidence" value="ECO:0000270"/>
    <property type="project" value="FlyBase"/>
</dbReference>
<dbReference type="GO" id="GO:0007165">
    <property type="term" value="P:signal transduction"/>
    <property type="evidence" value="ECO:0007669"/>
    <property type="project" value="UniProtKB-KW"/>
</dbReference>
<dbReference type="InterPro" id="IPR004117">
    <property type="entry name" value="7tm6_olfct_rcpt"/>
</dbReference>
<dbReference type="PANTHER" id="PTHR21137">
    <property type="entry name" value="ODORANT RECEPTOR"/>
    <property type="match status" value="1"/>
</dbReference>
<dbReference type="PANTHER" id="PTHR21137:SF35">
    <property type="entry name" value="ODORANT RECEPTOR 19A-RELATED"/>
    <property type="match status" value="1"/>
</dbReference>
<dbReference type="Pfam" id="PF02949">
    <property type="entry name" value="7tm_6"/>
    <property type="match status" value="1"/>
</dbReference>
<sequence>MLSQFFPHIKEKPLSERVKSRDAFVYLDRVMWSFGWTVPENKRWDLHYKLWSTFVTLLIFILLPISVSVEYIQRFKTFSAGEFLSSIQIGVNMYGSSFKSYLTMMGYKKRQEAKMSLDELDKRCVCDEERTIVHRHVALGNFCYIFYHIAYTSFLISNFLSFIMKRIHAWRMYFPYVDPEKQFYISSIAEVILRGWAVFMDLCTDVCPLISMVIARCHITLLKQRLRNLRSEPGRTEDEYLKELADCVRDHRLILDYVDALRSVFSGTIFVQFLLIGIVLGLSMINIMFFSTLSTGVAVVLFMSCVSMQTFPFCYLCNMIMDDCQEMADSLFQSDWTSADRRYKSTLVYFLHNLQQPIILTAGGVFPISMQTNLNMVKLAFTVVTIVKQFNLAEKFQ</sequence>
<name>OR22B_DROME</name>
<comment type="function">
    <text evidence="6 7 9">Odorant receptor which mediates acceptance or avoidance behavior, depending on its substrates. The odorant receptor repertoire encodes a large collection of odor stimuli that vary widely in identity, intensity, and duration. Involved in the behavioral responses to esters. Complexes with Orco to form odorant-sensing units, providing sensitive and prolonged odorant signaling and calcium permeability. They are necessary and sufficient to promote functional reconstitution of odor-evoked signaling in sensory neurons that normally respond only to carbon dioxide.</text>
</comment>
<comment type="subunit">
    <text evidence="7">Interacts with Orco, via conserved C-terminal cytoplasmic loops. Complexes exist early in the endomembrane system in olfactory sensory neurons (OSNs), coupling these complexes to the conserved ciliary trafficking pathway.</text>
</comment>
<comment type="subcellular location">
    <subcellularLocation>
        <location evidence="1">Cell membrane</location>
        <topology evidence="1">Multi-pass membrane protein</topology>
    </subcellularLocation>
</comment>
<comment type="tissue specificity">
    <text evidence="3 4 5 6 7">Expressed with Orco in 20-22 sensory neurons on the medial-proximal edge of the antenna. This expression pattern matches the distribution of the large sensilla basiconica. Expression is first seen at 60 hours APF in a subset of cells restricted to a subregion of the developing antenna. Expression continues throughout antennal development. Expressed in the ab3A neuron which responds to ethyl butyrate.</text>
</comment>
<comment type="miscellaneous">
    <text>The atypical heteromeric and topological design of the odorant receptors appears to be an insect-specific solution for odor recognition, making the OR/Orco complex an attractive target for the development of highly selective insect repellents to disrupt olfactory-mediated host-seeking behaviors of insect disease vectors. Odor-evoked OR currents are independent of known G-protein-coupled second messenger pathways.</text>
</comment>
<comment type="similarity">
    <text evidence="10">Belongs to the insect chemoreceptor superfamily. Heteromeric odorant receptor channel (TC 1.A.69) family. Or2a subfamily.</text>
</comment>
<comment type="sequence caution" evidence="10">
    <conflict type="miscellaneous discrepancy">
        <sequence resource="EMBL-CDS" id="CAR79088"/>
    </conflict>
    <text>Intron retention and rearrangement of DNA.</text>
</comment>
<evidence type="ECO:0000250" key="1"/>
<evidence type="ECO:0000255" key="2"/>
<evidence type="ECO:0000269" key="3">
    <source>
    </source>
</evidence>
<evidence type="ECO:0000269" key="4">
    <source>
    </source>
</evidence>
<evidence type="ECO:0000269" key="5">
    <source>
    </source>
</evidence>
<evidence type="ECO:0000269" key="6">
    <source>
    </source>
</evidence>
<evidence type="ECO:0000269" key="7">
    <source>
    </source>
</evidence>
<evidence type="ECO:0000269" key="8">
    <source>
    </source>
</evidence>
<evidence type="ECO:0000269" key="9">
    <source>
    </source>
</evidence>
<evidence type="ECO:0000305" key="10"/>
<keyword id="KW-1003">Cell membrane</keyword>
<keyword id="KW-0472">Membrane</keyword>
<keyword id="KW-0552">Olfaction</keyword>
<keyword id="KW-0675">Receptor</keyword>
<keyword id="KW-1185">Reference proteome</keyword>
<keyword id="KW-0716">Sensory transduction</keyword>
<keyword id="KW-0807">Transducer</keyword>
<keyword id="KW-0812">Transmembrane</keyword>
<keyword id="KW-1133">Transmembrane helix</keyword>
<proteinExistence type="evidence at protein level"/>